<gene>
    <name type="primary">rps3</name>
</gene>
<feature type="chain" id="PRO_0000230752" description="Small ribosomal subunit protein uS3c">
    <location>
        <begin position="1"/>
        <end position="218"/>
    </location>
</feature>
<feature type="domain" description="KH type-2">
    <location>
        <begin position="47"/>
        <end position="118"/>
    </location>
</feature>
<proteinExistence type="inferred from homology"/>
<name>RR3_LACSA</name>
<reference key="1">
    <citation type="journal article" date="2006" name="Transgenic Res.">
        <title>Efficient and stable transformation of Lactuca sativa L. cv. Cisco (lettuce) plastids.</title>
        <authorList>
            <person name="Kanamoto H."/>
            <person name="Yamashita A."/>
            <person name="Asao H."/>
            <person name="Okumura S."/>
            <person name="Takase H."/>
            <person name="Hattori M."/>
            <person name="Yokota A."/>
            <person name="Tomizawa K."/>
        </authorList>
    </citation>
    <scope>NUCLEOTIDE SEQUENCE [LARGE SCALE GENOMIC DNA]</scope>
    <source>
        <strain>cv. Cisco</strain>
    </source>
</reference>
<reference key="2">
    <citation type="submission" date="2006-01" db="EMBL/GenBank/DDBJ databases">
        <title>A comparison of the first two published chloroplast genomes in Asteraceae: Lactuca and Helianthus.</title>
        <authorList>
            <person name="Timme R.E."/>
            <person name="Kuehl J.V."/>
            <person name="Boore J.L."/>
            <person name="Jansen R.K."/>
        </authorList>
    </citation>
    <scope>NUCLEOTIDE SEQUENCE [LARGE SCALE GENOMIC DNA]</scope>
    <source>
        <strain>cv. Salinas</strain>
    </source>
</reference>
<accession>Q332T8</accession>
<accession>Q1KXI3</accession>
<organism>
    <name type="scientific">Lactuca sativa</name>
    <name type="common">Garden lettuce</name>
    <dbReference type="NCBI Taxonomy" id="4236"/>
    <lineage>
        <taxon>Eukaryota</taxon>
        <taxon>Viridiplantae</taxon>
        <taxon>Streptophyta</taxon>
        <taxon>Embryophyta</taxon>
        <taxon>Tracheophyta</taxon>
        <taxon>Spermatophyta</taxon>
        <taxon>Magnoliopsida</taxon>
        <taxon>eudicotyledons</taxon>
        <taxon>Gunneridae</taxon>
        <taxon>Pentapetalae</taxon>
        <taxon>asterids</taxon>
        <taxon>campanulids</taxon>
        <taxon>Asterales</taxon>
        <taxon>Asteraceae</taxon>
        <taxon>Cichorioideae</taxon>
        <taxon>Cichorieae</taxon>
        <taxon>Lactucinae</taxon>
        <taxon>Lactuca</taxon>
    </lineage>
</organism>
<comment type="subunit">
    <text evidence="1">Part of the 30S ribosomal subunit.</text>
</comment>
<comment type="subcellular location">
    <subcellularLocation>
        <location>Plastid</location>
        <location>Chloroplast</location>
    </subcellularLocation>
</comment>
<comment type="similarity">
    <text evidence="2">Belongs to the universal ribosomal protein uS3 family.</text>
</comment>
<keyword id="KW-0150">Chloroplast</keyword>
<keyword id="KW-0934">Plastid</keyword>
<keyword id="KW-0687">Ribonucleoprotein</keyword>
<keyword id="KW-0689">Ribosomal protein</keyword>
<keyword id="KW-0694">RNA-binding</keyword>
<keyword id="KW-0699">rRNA-binding</keyword>
<geneLocation type="chloroplast"/>
<evidence type="ECO:0000250" key="1"/>
<evidence type="ECO:0000305" key="2"/>
<protein>
    <recommendedName>
        <fullName evidence="2">Small ribosomal subunit protein uS3c</fullName>
    </recommendedName>
    <alternativeName>
        <fullName>30S ribosomal protein S3, chloroplastic</fullName>
    </alternativeName>
</protein>
<sequence>MGQKINPIGFRLGTTQGHHSLWFAQPKNYSEGLQEDKKIRTYIQNYVQKNMKTSSGVEGIARIEIQKRIDLIQIIIYMGFPKILIESRPRGIEELQMNLQKEFHSVNRKLNIAITRIEKPYGNPNILAEFIAGQLKNRVSFRKAMKKAIELTEQADTKGIQVQIAGRIDGKEIARVEWIREGRVPLQTIRAKIDYCCYTVRTIYGVLGIKIWIFIDGE</sequence>
<dbReference type="EMBL" id="AP007232">
    <property type="protein sequence ID" value="BAE47634.1"/>
    <property type="molecule type" value="Genomic_DNA"/>
</dbReference>
<dbReference type="EMBL" id="DQ383816">
    <property type="protein sequence ID" value="ABD47271.1"/>
    <property type="molecule type" value="Genomic_DNA"/>
</dbReference>
<dbReference type="RefSeq" id="YP_398367.1">
    <property type="nucleotide sequence ID" value="NC_007578.1"/>
</dbReference>
<dbReference type="SMR" id="Q332T8"/>
<dbReference type="GeneID" id="3772795"/>
<dbReference type="KEGG" id="lsv:3772795"/>
<dbReference type="OrthoDB" id="1842609at2759"/>
<dbReference type="GO" id="GO:0009507">
    <property type="term" value="C:chloroplast"/>
    <property type="evidence" value="ECO:0007669"/>
    <property type="project" value="UniProtKB-SubCell"/>
</dbReference>
<dbReference type="GO" id="GO:1990904">
    <property type="term" value="C:ribonucleoprotein complex"/>
    <property type="evidence" value="ECO:0007669"/>
    <property type="project" value="UniProtKB-KW"/>
</dbReference>
<dbReference type="GO" id="GO:0005840">
    <property type="term" value="C:ribosome"/>
    <property type="evidence" value="ECO:0007669"/>
    <property type="project" value="UniProtKB-KW"/>
</dbReference>
<dbReference type="GO" id="GO:0019843">
    <property type="term" value="F:rRNA binding"/>
    <property type="evidence" value="ECO:0007669"/>
    <property type="project" value="UniProtKB-UniRule"/>
</dbReference>
<dbReference type="GO" id="GO:0003735">
    <property type="term" value="F:structural constituent of ribosome"/>
    <property type="evidence" value="ECO:0007669"/>
    <property type="project" value="InterPro"/>
</dbReference>
<dbReference type="GO" id="GO:0006412">
    <property type="term" value="P:translation"/>
    <property type="evidence" value="ECO:0007669"/>
    <property type="project" value="UniProtKB-UniRule"/>
</dbReference>
<dbReference type="CDD" id="cd02412">
    <property type="entry name" value="KH-II_30S_S3"/>
    <property type="match status" value="1"/>
</dbReference>
<dbReference type="FunFam" id="3.30.1140.32:FF:000003">
    <property type="entry name" value="30S ribosomal protein S3, chloroplastic"/>
    <property type="match status" value="1"/>
</dbReference>
<dbReference type="FunFam" id="3.30.300.20:FF:000008">
    <property type="entry name" value="30S ribosomal protein S3, chloroplastic"/>
    <property type="match status" value="1"/>
</dbReference>
<dbReference type="Gene3D" id="3.30.300.20">
    <property type="match status" value="1"/>
</dbReference>
<dbReference type="Gene3D" id="3.30.1140.32">
    <property type="entry name" value="Ribosomal protein S3, C-terminal domain"/>
    <property type="match status" value="1"/>
</dbReference>
<dbReference type="HAMAP" id="MF_01309_B">
    <property type="entry name" value="Ribosomal_uS3_B"/>
    <property type="match status" value="1"/>
</dbReference>
<dbReference type="InterPro" id="IPR015946">
    <property type="entry name" value="KH_dom-like_a/b"/>
</dbReference>
<dbReference type="InterPro" id="IPR004044">
    <property type="entry name" value="KH_dom_type_2"/>
</dbReference>
<dbReference type="InterPro" id="IPR009019">
    <property type="entry name" value="KH_sf_prok-type"/>
</dbReference>
<dbReference type="InterPro" id="IPR036419">
    <property type="entry name" value="Ribosomal_S3_C_sf"/>
</dbReference>
<dbReference type="InterPro" id="IPR005704">
    <property type="entry name" value="Ribosomal_uS3_bac-typ"/>
</dbReference>
<dbReference type="InterPro" id="IPR001351">
    <property type="entry name" value="Ribosomal_uS3_C"/>
</dbReference>
<dbReference type="InterPro" id="IPR018280">
    <property type="entry name" value="Ribosomal_uS3_CS"/>
</dbReference>
<dbReference type="NCBIfam" id="TIGR01009">
    <property type="entry name" value="rpsC_bact"/>
    <property type="match status" value="1"/>
</dbReference>
<dbReference type="PANTHER" id="PTHR11760">
    <property type="entry name" value="30S/40S RIBOSOMAL PROTEIN S3"/>
    <property type="match status" value="1"/>
</dbReference>
<dbReference type="PANTHER" id="PTHR11760:SF19">
    <property type="entry name" value="SMALL RIBOSOMAL SUBUNIT PROTEIN US3C"/>
    <property type="match status" value="1"/>
</dbReference>
<dbReference type="Pfam" id="PF00189">
    <property type="entry name" value="Ribosomal_S3_C"/>
    <property type="match status" value="1"/>
</dbReference>
<dbReference type="SUPFAM" id="SSF54814">
    <property type="entry name" value="Prokaryotic type KH domain (KH-domain type II)"/>
    <property type="match status" value="1"/>
</dbReference>
<dbReference type="SUPFAM" id="SSF54821">
    <property type="entry name" value="Ribosomal protein S3 C-terminal domain"/>
    <property type="match status" value="1"/>
</dbReference>
<dbReference type="PROSITE" id="PS50823">
    <property type="entry name" value="KH_TYPE_2"/>
    <property type="match status" value="1"/>
</dbReference>
<dbReference type="PROSITE" id="PS00548">
    <property type="entry name" value="RIBOSOMAL_S3"/>
    <property type="match status" value="1"/>
</dbReference>